<sequence>MLQQLLSNAFTMVLIILVINIVYVSFSTMRLILTMKGRRYAAAFAGTIEMLIYVIGLSIVLDNLDQIQNVIAYALGYGMGIIVGMKIEEKLALGYTTVNVITKELDVDLPRQLREKGYGVTSWVAGGLEGDRTALQILTPRKYELQLYETIKTLDSKAFIISYEPKSIHGGFWVKAVKKRRIKE</sequence>
<gene>
    <name type="ordered locus">BPUM_0594</name>
</gene>
<name>Y594_BACP2</name>
<evidence type="ECO:0000255" key="1">
    <source>
        <dbReference type="HAMAP-Rule" id="MF_01515"/>
    </source>
</evidence>
<evidence type="ECO:0000305" key="2"/>
<proteinExistence type="inferred from homology"/>
<feature type="chain" id="PRO_0000315255" description="UPF0316 protein BPUM_0594">
    <location>
        <begin position="1"/>
        <end position="184"/>
    </location>
</feature>
<feature type="transmembrane region" description="Helical" evidence="1">
    <location>
        <begin position="9"/>
        <end position="29"/>
    </location>
</feature>
<feature type="transmembrane region" description="Helical" evidence="1">
    <location>
        <begin position="41"/>
        <end position="61"/>
    </location>
</feature>
<feature type="transmembrane region" description="Helical" evidence="1">
    <location>
        <begin position="67"/>
        <end position="87"/>
    </location>
</feature>
<dbReference type="EMBL" id="CP000813">
    <property type="protein sequence ID" value="ABV61286.1"/>
    <property type="status" value="ALT_INIT"/>
    <property type="molecule type" value="Genomic_DNA"/>
</dbReference>
<dbReference type="RefSeq" id="WP_024424505.1">
    <property type="nucleotide sequence ID" value="NZ_VEIS01000001.1"/>
</dbReference>
<dbReference type="SMR" id="A8FAL9"/>
<dbReference type="STRING" id="315750.BPUM_0594"/>
<dbReference type="KEGG" id="bpu:BPUM_0594"/>
<dbReference type="eggNOG" id="COG4843">
    <property type="taxonomic scope" value="Bacteria"/>
</dbReference>
<dbReference type="HOGENOM" id="CLU_106166_1_0_9"/>
<dbReference type="OrthoDB" id="48231at2"/>
<dbReference type="Proteomes" id="UP000001355">
    <property type="component" value="Chromosome"/>
</dbReference>
<dbReference type="GO" id="GO:0005886">
    <property type="term" value="C:plasma membrane"/>
    <property type="evidence" value="ECO:0007669"/>
    <property type="project" value="UniProtKB-SubCell"/>
</dbReference>
<dbReference type="CDD" id="cd16381">
    <property type="entry name" value="YitT_C_like_1"/>
    <property type="match status" value="1"/>
</dbReference>
<dbReference type="HAMAP" id="MF_01515">
    <property type="entry name" value="UPF0316"/>
    <property type="match status" value="1"/>
</dbReference>
<dbReference type="InterPro" id="IPR019264">
    <property type="entry name" value="DUF2179"/>
</dbReference>
<dbReference type="InterPro" id="IPR044035">
    <property type="entry name" value="DUF5698"/>
</dbReference>
<dbReference type="InterPro" id="IPR022930">
    <property type="entry name" value="UPF0316"/>
</dbReference>
<dbReference type="NCBIfam" id="NF003194">
    <property type="entry name" value="PRK04164.1-5"/>
    <property type="match status" value="1"/>
</dbReference>
<dbReference type="PANTHER" id="PTHR40060">
    <property type="entry name" value="UPF0316 PROTEIN YEBE"/>
    <property type="match status" value="1"/>
</dbReference>
<dbReference type="PANTHER" id="PTHR40060:SF1">
    <property type="entry name" value="UPF0316 PROTEIN YEBE"/>
    <property type="match status" value="1"/>
</dbReference>
<dbReference type="Pfam" id="PF10035">
    <property type="entry name" value="DUF2179"/>
    <property type="match status" value="1"/>
</dbReference>
<dbReference type="Pfam" id="PF18955">
    <property type="entry name" value="DUF5698"/>
    <property type="match status" value="1"/>
</dbReference>
<reference key="1">
    <citation type="journal article" date="2007" name="PLoS ONE">
        <title>Paradoxical DNA repair and peroxide resistance gene conservation in Bacillus pumilus SAFR-032.</title>
        <authorList>
            <person name="Gioia J."/>
            <person name="Yerrapragada S."/>
            <person name="Qin X."/>
            <person name="Jiang H."/>
            <person name="Igboeli O.C."/>
            <person name="Muzny D."/>
            <person name="Dugan-Rocha S."/>
            <person name="Ding Y."/>
            <person name="Hawes A."/>
            <person name="Liu W."/>
            <person name="Perez L."/>
            <person name="Kovar C."/>
            <person name="Dinh H."/>
            <person name="Lee S."/>
            <person name="Nazareth L."/>
            <person name="Blyth P."/>
            <person name="Holder M."/>
            <person name="Buhay C."/>
            <person name="Tirumalai M.R."/>
            <person name="Liu Y."/>
            <person name="Dasgupta I."/>
            <person name="Bokhetache L."/>
            <person name="Fujita M."/>
            <person name="Karouia F."/>
            <person name="Eswara Moorthy P."/>
            <person name="Siefert J."/>
            <person name="Uzman A."/>
            <person name="Buzumbo P."/>
            <person name="Verma A."/>
            <person name="Zwiya H."/>
            <person name="McWilliams B.D."/>
            <person name="Olowu A."/>
            <person name="Clinkenbeard K.D."/>
            <person name="Newcombe D."/>
            <person name="Golebiewski L."/>
            <person name="Petrosino J.F."/>
            <person name="Nicholson W.L."/>
            <person name="Fox G.E."/>
            <person name="Venkateswaran K."/>
            <person name="Highlander S.K."/>
            <person name="Weinstock G.M."/>
        </authorList>
    </citation>
    <scope>NUCLEOTIDE SEQUENCE [LARGE SCALE GENOMIC DNA]</scope>
    <source>
        <strain>SAFR-032</strain>
    </source>
</reference>
<comment type="subcellular location">
    <subcellularLocation>
        <location evidence="1">Cell membrane</location>
        <topology evidence="1">Multi-pass membrane protein</topology>
    </subcellularLocation>
</comment>
<comment type="similarity">
    <text evidence="1">Belongs to the UPF0316 family.</text>
</comment>
<comment type="sequence caution" evidence="2">
    <conflict type="erroneous initiation">
        <sequence resource="EMBL-CDS" id="ABV61286"/>
    </conflict>
</comment>
<protein>
    <recommendedName>
        <fullName evidence="1">UPF0316 protein BPUM_0594</fullName>
    </recommendedName>
</protein>
<organism>
    <name type="scientific">Bacillus pumilus (strain SAFR-032)</name>
    <dbReference type="NCBI Taxonomy" id="315750"/>
    <lineage>
        <taxon>Bacteria</taxon>
        <taxon>Bacillati</taxon>
        <taxon>Bacillota</taxon>
        <taxon>Bacilli</taxon>
        <taxon>Bacillales</taxon>
        <taxon>Bacillaceae</taxon>
        <taxon>Bacillus</taxon>
    </lineage>
</organism>
<keyword id="KW-1003">Cell membrane</keyword>
<keyword id="KW-0472">Membrane</keyword>
<keyword id="KW-0812">Transmembrane</keyword>
<keyword id="KW-1133">Transmembrane helix</keyword>
<accession>A8FAL9</accession>